<comment type="function">
    <text evidence="1">E1 component of the 2-oxoglutarate dehydrogenase (OGDH) complex which catalyzes the decarboxylation of 2-oxoglutarate, the first step in the conversion of 2-oxoglutarate to succinyl-CoA and CO(2).</text>
</comment>
<comment type="catalytic activity">
    <reaction evidence="1">
        <text>N(6)-[(R)-lipoyl]-L-lysyl-[protein] + 2-oxoglutarate + H(+) = N(6)-[(R)-S(8)-succinyldihydrolipoyl]-L-lysyl-[protein] + CO2</text>
        <dbReference type="Rhea" id="RHEA:12188"/>
        <dbReference type="Rhea" id="RHEA-COMP:10474"/>
        <dbReference type="Rhea" id="RHEA-COMP:20092"/>
        <dbReference type="ChEBI" id="CHEBI:15378"/>
        <dbReference type="ChEBI" id="CHEBI:16526"/>
        <dbReference type="ChEBI" id="CHEBI:16810"/>
        <dbReference type="ChEBI" id="CHEBI:83099"/>
        <dbReference type="ChEBI" id="CHEBI:83120"/>
        <dbReference type="EC" id="1.2.4.2"/>
    </reaction>
</comment>
<comment type="cofactor">
    <cofactor evidence="1">
        <name>thiamine diphosphate</name>
        <dbReference type="ChEBI" id="CHEBI:58937"/>
    </cofactor>
</comment>
<comment type="subunit">
    <text evidence="1">Homodimer. Part of the 2-oxoglutarate dehydrogenase (OGDH) complex composed of E1 (2-oxoglutarate dehydrogenase), E2 (dihydrolipoamide succinyltransferase) and E3 (dihydrolipoamide dehydrogenase); the complex contains multiple copies of the three enzymatic components (E1, E2 and E3).</text>
</comment>
<comment type="similarity">
    <text evidence="1">Belongs to the alpha-ketoglutarate dehydrogenase family.</text>
</comment>
<proteinExistence type="inferred from homology"/>
<dbReference type="EC" id="1.2.4.2" evidence="1"/>
<dbReference type="EMBL" id="AE008917">
    <property type="protein sequence ID" value="AAL51322.1"/>
    <property type="molecule type" value="Genomic_DNA"/>
</dbReference>
<dbReference type="PIR" id="AG3269">
    <property type="entry name" value="AG3269"/>
</dbReference>
<dbReference type="RefSeq" id="WP_004684456.1">
    <property type="nucleotide sequence ID" value="NZ_GG703778.1"/>
</dbReference>
<dbReference type="SMR" id="Q8YJE4"/>
<dbReference type="GeneID" id="29593507"/>
<dbReference type="KEGG" id="bme:BMEI0140"/>
<dbReference type="KEGG" id="bmel:DK63_1295"/>
<dbReference type="PATRIC" id="fig|224914.52.peg.1366"/>
<dbReference type="eggNOG" id="COG0567">
    <property type="taxonomic scope" value="Bacteria"/>
</dbReference>
<dbReference type="PhylomeDB" id="Q8YJE4"/>
<dbReference type="Proteomes" id="UP000000419">
    <property type="component" value="Chromosome I"/>
</dbReference>
<dbReference type="GO" id="GO:0005829">
    <property type="term" value="C:cytosol"/>
    <property type="evidence" value="ECO:0007669"/>
    <property type="project" value="TreeGrafter"/>
</dbReference>
<dbReference type="GO" id="GO:0045252">
    <property type="term" value="C:oxoglutarate dehydrogenase complex"/>
    <property type="evidence" value="ECO:0007669"/>
    <property type="project" value="TreeGrafter"/>
</dbReference>
<dbReference type="GO" id="GO:0004591">
    <property type="term" value="F:oxoglutarate dehydrogenase (succinyl-transferring) activity"/>
    <property type="evidence" value="ECO:0007669"/>
    <property type="project" value="UniProtKB-UniRule"/>
</dbReference>
<dbReference type="GO" id="GO:0030976">
    <property type="term" value="F:thiamine pyrophosphate binding"/>
    <property type="evidence" value="ECO:0007669"/>
    <property type="project" value="UniProtKB-UniRule"/>
</dbReference>
<dbReference type="GO" id="GO:0006096">
    <property type="term" value="P:glycolytic process"/>
    <property type="evidence" value="ECO:0007669"/>
    <property type="project" value="UniProtKB-UniRule"/>
</dbReference>
<dbReference type="GO" id="GO:0006099">
    <property type="term" value="P:tricarboxylic acid cycle"/>
    <property type="evidence" value="ECO:0007669"/>
    <property type="project" value="TreeGrafter"/>
</dbReference>
<dbReference type="CDD" id="cd02016">
    <property type="entry name" value="TPP_E1_OGDC_like"/>
    <property type="match status" value="1"/>
</dbReference>
<dbReference type="FunFam" id="3.40.50.12470:FF:000003">
    <property type="entry name" value="2-oxoglutarate dehydrogenase E1 component"/>
    <property type="match status" value="1"/>
</dbReference>
<dbReference type="Gene3D" id="3.40.50.12470">
    <property type="match status" value="1"/>
</dbReference>
<dbReference type="Gene3D" id="3.40.50.970">
    <property type="match status" value="1"/>
</dbReference>
<dbReference type="Gene3D" id="3.40.50.11610">
    <property type="entry name" value="Multifunctional 2-oxoglutarate metabolism enzyme, C-terminal domain"/>
    <property type="match status" value="1"/>
</dbReference>
<dbReference type="Gene3D" id="1.10.287.1150">
    <property type="entry name" value="TPP helical domain"/>
    <property type="match status" value="1"/>
</dbReference>
<dbReference type="HAMAP" id="MF_01169">
    <property type="entry name" value="SucA_OdhA"/>
    <property type="match status" value="1"/>
</dbReference>
<dbReference type="InterPro" id="IPR032106">
    <property type="entry name" value="2-oxogl_dehyd_N"/>
</dbReference>
<dbReference type="InterPro" id="IPR011603">
    <property type="entry name" value="2oxoglutarate_DH_E1"/>
</dbReference>
<dbReference type="InterPro" id="IPR023784">
    <property type="entry name" value="2oxoglutarate_DH_E1_bac"/>
</dbReference>
<dbReference type="InterPro" id="IPR001017">
    <property type="entry name" value="DH_E1"/>
</dbReference>
<dbReference type="InterPro" id="IPR042179">
    <property type="entry name" value="KGD_C_sf"/>
</dbReference>
<dbReference type="InterPro" id="IPR031717">
    <property type="entry name" value="ODO-1/KGD_C"/>
</dbReference>
<dbReference type="InterPro" id="IPR029061">
    <property type="entry name" value="THDP-binding"/>
</dbReference>
<dbReference type="InterPro" id="IPR005475">
    <property type="entry name" value="Transketolase-like_Pyr-bd"/>
</dbReference>
<dbReference type="NCBIfam" id="TIGR00239">
    <property type="entry name" value="2oxo_dh_E1"/>
    <property type="match status" value="1"/>
</dbReference>
<dbReference type="NCBIfam" id="NF006914">
    <property type="entry name" value="PRK09404.1"/>
    <property type="match status" value="1"/>
</dbReference>
<dbReference type="NCBIfam" id="NF008907">
    <property type="entry name" value="PRK12270.1"/>
    <property type="match status" value="1"/>
</dbReference>
<dbReference type="PANTHER" id="PTHR23152:SF4">
    <property type="entry name" value="2-OXOADIPATE DEHYDROGENASE COMPLEX COMPONENT E1"/>
    <property type="match status" value="1"/>
</dbReference>
<dbReference type="PANTHER" id="PTHR23152">
    <property type="entry name" value="2-OXOGLUTARATE DEHYDROGENASE"/>
    <property type="match status" value="1"/>
</dbReference>
<dbReference type="Pfam" id="PF16078">
    <property type="entry name" value="2-oxogl_dehyd_N"/>
    <property type="match status" value="1"/>
</dbReference>
<dbReference type="Pfam" id="PF00676">
    <property type="entry name" value="E1_dh"/>
    <property type="match status" value="1"/>
</dbReference>
<dbReference type="Pfam" id="PF16870">
    <property type="entry name" value="OxoGdeHyase_C"/>
    <property type="match status" value="1"/>
</dbReference>
<dbReference type="Pfam" id="PF02779">
    <property type="entry name" value="Transket_pyr"/>
    <property type="match status" value="1"/>
</dbReference>
<dbReference type="PIRSF" id="PIRSF000157">
    <property type="entry name" value="Oxoglu_dh_E1"/>
    <property type="match status" value="1"/>
</dbReference>
<dbReference type="SMART" id="SM00861">
    <property type="entry name" value="Transket_pyr"/>
    <property type="match status" value="1"/>
</dbReference>
<dbReference type="SUPFAM" id="SSF52518">
    <property type="entry name" value="Thiamin diphosphate-binding fold (THDP-binding)"/>
    <property type="match status" value="2"/>
</dbReference>
<reference key="1">
    <citation type="journal article" date="2002" name="Proc. Natl. Acad. Sci. U.S.A.">
        <title>The genome sequence of the facultative intracellular pathogen Brucella melitensis.</title>
        <authorList>
            <person name="DelVecchio V.G."/>
            <person name="Kapatral V."/>
            <person name="Redkar R.J."/>
            <person name="Patra G."/>
            <person name="Mujer C."/>
            <person name="Los T."/>
            <person name="Ivanova N."/>
            <person name="Anderson I."/>
            <person name="Bhattacharyya A."/>
            <person name="Lykidis A."/>
            <person name="Reznik G."/>
            <person name="Jablonski L."/>
            <person name="Larsen N."/>
            <person name="D'Souza M."/>
            <person name="Bernal A."/>
            <person name="Mazur M."/>
            <person name="Goltsman E."/>
            <person name="Selkov E."/>
            <person name="Elzer P.H."/>
            <person name="Hagius S."/>
            <person name="O'Callaghan D."/>
            <person name="Letesson J.-J."/>
            <person name="Haselkorn R."/>
            <person name="Kyrpides N.C."/>
            <person name="Overbeek R."/>
        </authorList>
    </citation>
    <scope>NUCLEOTIDE SEQUENCE [LARGE SCALE GENOMIC DNA]</scope>
    <source>
        <strain>ATCC 23456 / CCUG 17765 / NCTC 10094 / 16M</strain>
    </source>
</reference>
<protein>
    <recommendedName>
        <fullName evidence="1">2-oxoglutarate dehydrogenase E1 component</fullName>
        <ecNumber evidence="1">1.2.4.2</ecNumber>
    </recommendedName>
    <alternativeName>
        <fullName evidence="1">Alpha-ketoglutarate dehydrogenase</fullName>
    </alternativeName>
</protein>
<evidence type="ECO:0000255" key="1">
    <source>
        <dbReference type="HAMAP-Rule" id="MF_01169"/>
    </source>
</evidence>
<organism>
    <name type="scientific">Brucella melitensis biotype 1 (strain ATCC 23456 / CCUG 17765 / NCTC 10094 / 16M)</name>
    <dbReference type="NCBI Taxonomy" id="224914"/>
    <lineage>
        <taxon>Bacteria</taxon>
        <taxon>Pseudomonadati</taxon>
        <taxon>Pseudomonadota</taxon>
        <taxon>Alphaproteobacteria</taxon>
        <taxon>Hyphomicrobiales</taxon>
        <taxon>Brucellaceae</taxon>
        <taxon>Brucella/Ochrobactrum group</taxon>
        <taxon>Brucella</taxon>
    </lineage>
</organism>
<sequence>MAKQEQAPDRANDVFALTSFLYGGNADYIEELYAKYEDDPNSVDPQWRDFFAKLGDNADDVKKNAEGPSWTRKNWPIAANGELVSALDGNWAEVEKHVTDKLKGKAAKGEAKGAAGTPLTAEEITQAARDSVRAIMMIRAYRMRGHLHANLDPLGLAEKPNDYNELEPENYGFTPADYNRKIFIDNVLGLEYATVPEMLDILKRTYCGAIGVEFMHISDPAEKAWIQERIEGPDKKVAFTPEGKKAILSKLIEAEGFEQFIDVKYKGTKRFGLDGGESLIPALEQIVKRGGQMGLKEVVLGMAHRGRLNVLSQVMGKPHRAIFHEFKGGSYTPDDVEGSGDVKYHLGASSDREFDGNKVHLSLTANPSHLEIVNPVVMGKARAKQDLLVGRTRDDMVPLSERAKVLPLLLHGDAAFAGQGVVAECLGLSGLKGHRVAGTLHFIINNQIGFTTNPAFSRSSPYPSDVAKMIEAPIFHVNGDDPEAVVFAAKVATEFRMTFHKPVVIDMFCYRRFGHNEGDEPSFTQPLMYKAIRAHKTTVQLYGEKLIAEGLVTQDDIDRMKADWRQKLEGEFEAGQSYKPNKADWLDGAWAGLRTADNADEQRRGKTAVPVKTLKEIGKKLVEVPKDFHVHRTIQRFLDNRAKMMETGEGIDWATAESLAFGSLAVEAHPIRLSGQDVERGTFSQRHTVLYDQENQNRYIPLNNLQKGQAIYEAINSMLSEEAVLGYEYGYSLSDPRALVLWEAQFGDFANGAQVVFDQFISSGERKWLRMSGLVCLLPHGFEGQGPEHSSARLERYLQLCAEDNMQVANVTTPANYFHILRRQMKRDFRKPLIMMTPKSLLRHKRAISTLAELSGESSFHRLLWDDAQYNKDEGIKLQKDAKIRRVVLCSGKVYYDLYEEREKRGIDDVYLLRVEQLYPFPAKALINELSRFRHAEMVWCQEEPKNMGAWSFIDPYLEWVLAHIDAKHQRVRYAGRPAAASPATGLMSKHLAQLAAFLEDALG</sequence>
<gene>
    <name evidence="1" type="primary">sucA</name>
    <name evidence="1" type="synonym">odhA</name>
    <name type="ordered locus">BMEI0140</name>
</gene>
<keyword id="KW-0324">Glycolysis</keyword>
<keyword id="KW-0560">Oxidoreductase</keyword>
<keyword id="KW-0786">Thiamine pyrophosphate</keyword>
<feature type="chain" id="PRO_0000162170" description="2-oxoglutarate dehydrogenase E1 component">
    <location>
        <begin position="1"/>
        <end position="1004"/>
    </location>
</feature>
<accession>Q8YJE4</accession>
<name>ODO1_BRUME</name>